<keyword id="KW-0496">Mitochondrion</keyword>
<keyword id="KW-1185">Reference proteome</keyword>
<keyword id="KW-0677">Repeat</keyword>
<keyword id="KW-0809">Transit peptide</keyword>
<organism>
    <name type="scientific">Arabidopsis thaliana</name>
    <name type="common">Mouse-ear cress</name>
    <dbReference type="NCBI Taxonomy" id="3702"/>
    <lineage>
        <taxon>Eukaryota</taxon>
        <taxon>Viridiplantae</taxon>
        <taxon>Streptophyta</taxon>
        <taxon>Embryophyta</taxon>
        <taxon>Tracheophyta</taxon>
        <taxon>Spermatophyta</taxon>
        <taxon>Magnoliopsida</taxon>
        <taxon>eudicotyledons</taxon>
        <taxon>Gunneridae</taxon>
        <taxon>Pentapetalae</taxon>
        <taxon>rosids</taxon>
        <taxon>malvids</taxon>
        <taxon>Brassicales</taxon>
        <taxon>Brassicaceae</taxon>
        <taxon>Camelineae</taxon>
        <taxon>Arabidopsis</taxon>
    </lineage>
</organism>
<protein>
    <recommendedName>
        <fullName>Pentatricopeptide repeat-containing protein At2g22410, mitochondrial</fullName>
    </recommendedName>
</protein>
<reference key="1">
    <citation type="journal article" date="1999" name="Nature">
        <title>Sequence and analysis of chromosome 2 of the plant Arabidopsis thaliana.</title>
        <authorList>
            <person name="Lin X."/>
            <person name="Kaul S."/>
            <person name="Rounsley S.D."/>
            <person name="Shea T.P."/>
            <person name="Benito M.-I."/>
            <person name="Town C.D."/>
            <person name="Fujii C.Y."/>
            <person name="Mason T.M."/>
            <person name="Bowman C.L."/>
            <person name="Barnstead M.E."/>
            <person name="Feldblyum T.V."/>
            <person name="Buell C.R."/>
            <person name="Ketchum K.A."/>
            <person name="Lee J.J."/>
            <person name="Ronning C.M."/>
            <person name="Koo H.L."/>
            <person name="Moffat K.S."/>
            <person name="Cronin L.A."/>
            <person name="Shen M."/>
            <person name="Pai G."/>
            <person name="Van Aken S."/>
            <person name="Umayam L."/>
            <person name="Tallon L.J."/>
            <person name="Gill J.E."/>
            <person name="Adams M.D."/>
            <person name="Carrera A.J."/>
            <person name="Creasy T.H."/>
            <person name="Goodman H.M."/>
            <person name="Somerville C.R."/>
            <person name="Copenhaver G.P."/>
            <person name="Preuss D."/>
            <person name="Nierman W.C."/>
            <person name="White O."/>
            <person name="Eisen J.A."/>
            <person name="Salzberg S.L."/>
            <person name="Fraser C.M."/>
            <person name="Venter J.C."/>
        </authorList>
    </citation>
    <scope>NUCLEOTIDE SEQUENCE [LARGE SCALE GENOMIC DNA]</scope>
    <source>
        <strain>cv. Columbia</strain>
    </source>
</reference>
<reference key="2">
    <citation type="journal article" date="2017" name="Plant J.">
        <title>Araport11: a complete reannotation of the Arabidopsis thaliana reference genome.</title>
        <authorList>
            <person name="Cheng C.Y."/>
            <person name="Krishnakumar V."/>
            <person name="Chan A.P."/>
            <person name="Thibaud-Nissen F."/>
            <person name="Schobel S."/>
            <person name="Town C.D."/>
        </authorList>
    </citation>
    <scope>GENOME REANNOTATION</scope>
    <source>
        <strain>cv. Columbia</strain>
    </source>
</reference>
<reference key="3">
    <citation type="journal article" date="2003" name="Science">
        <title>Empirical analysis of transcriptional activity in the Arabidopsis genome.</title>
        <authorList>
            <person name="Yamada K."/>
            <person name="Lim J."/>
            <person name="Dale J.M."/>
            <person name="Chen H."/>
            <person name="Shinn P."/>
            <person name="Palm C.J."/>
            <person name="Southwick A.M."/>
            <person name="Wu H.C."/>
            <person name="Kim C.J."/>
            <person name="Nguyen M."/>
            <person name="Pham P.K."/>
            <person name="Cheuk R.F."/>
            <person name="Karlin-Newmann G."/>
            <person name="Liu S.X."/>
            <person name="Lam B."/>
            <person name="Sakano H."/>
            <person name="Wu T."/>
            <person name="Yu G."/>
            <person name="Miranda M."/>
            <person name="Quach H.L."/>
            <person name="Tripp M."/>
            <person name="Chang C.H."/>
            <person name="Lee J.M."/>
            <person name="Toriumi M.J."/>
            <person name="Chan M.M."/>
            <person name="Tang C.C."/>
            <person name="Onodera C.S."/>
            <person name="Deng J.M."/>
            <person name="Akiyama K."/>
            <person name="Ansari Y."/>
            <person name="Arakawa T."/>
            <person name="Banh J."/>
            <person name="Banno F."/>
            <person name="Bowser L."/>
            <person name="Brooks S.Y."/>
            <person name="Carninci P."/>
            <person name="Chao Q."/>
            <person name="Choy N."/>
            <person name="Enju A."/>
            <person name="Goldsmith A.D."/>
            <person name="Gurjal M."/>
            <person name="Hansen N.F."/>
            <person name="Hayashizaki Y."/>
            <person name="Johnson-Hopson C."/>
            <person name="Hsuan V.W."/>
            <person name="Iida K."/>
            <person name="Karnes M."/>
            <person name="Khan S."/>
            <person name="Koesema E."/>
            <person name="Ishida J."/>
            <person name="Jiang P.X."/>
            <person name="Jones T."/>
            <person name="Kawai J."/>
            <person name="Kamiya A."/>
            <person name="Meyers C."/>
            <person name="Nakajima M."/>
            <person name="Narusaka M."/>
            <person name="Seki M."/>
            <person name="Sakurai T."/>
            <person name="Satou M."/>
            <person name="Tamse R."/>
            <person name="Vaysberg M."/>
            <person name="Wallender E.K."/>
            <person name="Wong C."/>
            <person name="Yamamura Y."/>
            <person name="Yuan S."/>
            <person name="Shinozaki K."/>
            <person name="Davis R.W."/>
            <person name="Theologis A."/>
            <person name="Ecker J.R."/>
        </authorList>
    </citation>
    <scope>NUCLEOTIDE SEQUENCE [LARGE SCALE MRNA]</scope>
    <source>
        <strain>cv. Columbia</strain>
    </source>
</reference>
<reference key="4">
    <citation type="journal article" date="2000" name="Plant Mol. Biol.">
        <title>In Arabidopsis thaliana, 1% of the genome codes for a novel protein family unique to plants.</title>
        <authorList>
            <person name="Aubourg S."/>
            <person name="Boudet N."/>
            <person name="Kreis M."/>
            <person name="Lecharny A."/>
        </authorList>
    </citation>
    <scope>GENE FAMILY</scope>
</reference>
<reference key="5">
    <citation type="journal article" date="2004" name="Plant Cell">
        <title>Genome-wide analysis of Arabidopsis pentatricopeptide repeat proteins reveals their essential role in organelle biogenesis.</title>
        <authorList>
            <person name="Lurin C."/>
            <person name="Andres C."/>
            <person name="Aubourg S."/>
            <person name="Bellaoui M."/>
            <person name="Bitton F."/>
            <person name="Bruyere C."/>
            <person name="Caboche M."/>
            <person name="Debast C."/>
            <person name="Gualberto J."/>
            <person name="Hoffmann B."/>
            <person name="Lecharny A."/>
            <person name="Le Ret M."/>
            <person name="Martin-Magniette M.-L."/>
            <person name="Mireau H."/>
            <person name="Peeters N."/>
            <person name="Renou J.-P."/>
            <person name="Szurek B."/>
            <person name="Taconnat L."/>
            <person name="Small I."/>
        </authorList>
    </citation>
    <scope>GENE FAMILY</scope>
</reference>
<accession>Q9SJZ3</accession>
<feature type="transit peptide" description="Mitochondrion" evidence="1">
    <location>
        <begin position="1"/>
        <end position="32"/>
    </location>
</feature>
<feature type="chain" id="PRO_0000356028" description="Pentatricopeptide repeat-containing protein At2g22410, mitochondrial">
    <location>
        <begin position="33"/>
        <end position="681"/>
    </location>
</feature>
<feature type="repeat" description="PPR 1">
    <location>
        <begin position="117"/>
        <end position="151"/>
    </location>
</feature>
<feature type="repeat" description="PPR 2">
    <location>
        <begin position="155"/>
        <end position="189"/>
    </location>
</feature>
<feature type="repeat" description="PPR 3">
    <location>
        <begin position="190"/>
        <end position="220"/>
    </location>
</feature>
<feature type="repeat" description="PPR 4">
    <location>
        <begin position="221"/>
        <end position="255"/>
    </location>
</feature>
<feature type="repeat" description="PPR 5">
    <location>
        <begin position="256"/>
        <end position="290"/>
    </location>
</feature>
<feature type="repeat" description="PPR 6">
    <location>
        <begin position="291"/>
        <end position="321"/>
    </location>
</feature>
<feature type="repeat" description="PPR 7">
    <location>
        <begin position="322"/>
        <end position="356"/>
    </location>
</feature>
<feature type="repeat" description="PPR 8">
    <location>
        <begin position="357"/>
        <end position="387"/>
    </location>
</feature>
<feature type="repeat" description="PPR 9">
    <location>
        <begin position="388"/>
        <end position="422"/>
    </location>
</feature>
<feature type="repeat" description="PPR 10">
    <location>
        <begin position="423"/>
        <end position="453"/>
    </location>
</feature>
<feature type="repeat" description="PPR 11">
    <location>
        <begin position="454"/>
        <end position="488"/>
    </location>
</feature>
<feature type="repeat" description="PPR 12">
    <location>
        <begin position="489"/>
        <end position="519"/>
    </location>
</feature>
<feature type="repeat" description="PPR 13">
    <location>
        <begin position="525"/>
        <end position="555"/>
    </location>
</feature>
<feature type="region of interest" description="Type E motif">
    <location>
        <begin position="560"/>
        <end position="635"/>
    </location>
</feature>
<feature type="region of interest" description="Type E(+) motif">
    <location>
        <begin position="636"/>
        <end position="666"/>
    </location>
</feature>
<sequence>MNISKAKLLLLPPPLTPKLNRSLYSHSQRRTRSLPHHRDKPINWNSTHSFVLHNPLLSLLEKCKLLLHLKQIQAQMIINGLILDPFASSRLIAFCALSESRYLDYSVKILKGIENPNIFSWNVTIRGFSESENPKESFLLYKQMLRHGCCESRPDHFTYPVLFKVCADLRLSSLGHMILGHVLKLRLELVSHVHNASIHMFASCGDMENARKVFDESPVRDLVSWNCLINGYKKIGEAEKAIYVYKLMESEGVKPDDVTMIGLVSSCSMLGDLNRGKEFYEYVKENGLRMTIPLVNALMDMFSKCGDIHEARRIFDNLEKRTIVSWTTMISGYARCGLLDVSRKLFDDMEEKDVVLWNAMIGGSVQAKRGQDALALFQEMQTSNTKPDEITMIHCLSACSQLGALDVGIWIHRYIEKYSLSLNVALGTSLVDMYAKCGNISEALSVFHGIQTRNSLTYTAIIGGLALHGDASTAISYFNEMIDAGIAPDEITFIGLLSACCHGGMIQTGRDYFSQMKSRFNLNPQLKHYSIMVDLLGRAGLLEEADRLMESMPMEADAAVWGALLFGCRMHGNVELGEKAAKKLLELDPSDSGIYVLLDGMYGEANMWEDAKRARRMMNERGVEKIPGCSSIEVNGIVCEFIVRDKSRPESEKIYDRLHCLGRHMRSSLSVLFSEYEITNN</sequence>
<comment type="subcellular location">
    <subcellularLocation>
        <location evidence="2">Mitochondrion</location>
    </subcellularLocation>
</comment>
<comment type="similarity">
    <text evidence="2">Belongs to the PPR family. PCMP-E subfamily.</text>
</comment>
<comment type="online information" name="Pentatricopeptide repeat proteins">
    <link uri="https://ppr.plantenergy.uwa.edu.au"/>
</comment>
<name>PP169_ARATH</name>
<evidence type="ECO:0000255" key="1"/>
<evidence type="ECO:0000305" key="2"/>
<gene>
    <name type="primary">PCMP-E28</name>
    <name type="ordered locus">At2g22410</name>
    <name type="ORF">F14M13.19</name>
</gene>
<proteinExistence type="evidence at transcript level"/>
<dbReference type="EMBL" id="AC006592">
    <property type="protein sequence ID" value="AAD22358.1"/>
    <property type="molecule type" value="Genomic_DNA"/>
</dbReference>
<dbReference type="EMBL" id="CP002685">
    <property type="protein sequence ID" value="AEC07300.1"/>
    <property type="molecule type" value="Genomic_DNA"/>
</dbReference>
<dbReference type="EMBL" id="AY064984">
    <property type="protein sequence ID" value="AAL57637.1"/>
    <property type="molecule type" value="mRNA"/>
</dbReference>
<dbReference type="PIR" id="C84612">
    <property type="entry name" value="C84612"/>
</dbReference>
<dbReference type="RefSeq" id="NP_179827.1">
    <property type="nucleotide sequence ID" value="NM_127805.3"/>
</dbReference>
<dbReference type="SMR" id="Q9SJZ3"/>
<dbReference type="FunCoup" id="Q9SJZ3">
    <property type="interactions" value="424"/>
</dbReference>
<dbReference type="STRING" id="3702.Q9SJZ3"/>
<dbReference type="PaxDb" id="3702-AT2G22410.1"/>
<dbReference type="ProteomicsDB" id="250499"/>
<dbReference type="EnsemblPlants" id="AT2G22410.1">
    <property type="protein sequence ID" value="AT2G22410.1"/>
    <property type="gene ID" value="AT2G22410"/>
</dbReference>
<dbReference type="GeneID" id="816772"/>
<dbReference type="Gramene" id="AT2G22410.1">
    <property type="protein sequence ID" value="AT2G22410.1"/>
    <property type="gene ID" value="AT2G22410"/>
</dbReference>
<dbReference type="KEGG" id="ath:AT2G22410"/>
<dbReference type="Araport" id="AT2G22410"/>
<dbReference type="TAIR" id="AT2G22410">
    <property type="gene designation" value="SLO1"/>
</dbReference>
<dbReference type="eggNOG" id="KOG4197">
    <property type="taxonomic scope" value="Eukaryota"/>
</dbReference>
<dbReference type="HOGENOM" id="CLU_002706_0_1_1"/>
<dbReference type="InParanoid" id="Q9SJZ3"/>
<dbReference type="OMA" id="FSWNVAI"/>
<dbReference type="PhylomeDB" id="Q9SJZ3"/>
<dbReference type="PRO" id="PR:Q9SJZ3"/>
<dbReference type="Proteomes" id="UP000006548">
    <property type="component" value="Chromosome 2"/>
</dbReference>
<dbReference type="ExpressionAtlas" id="Q9SJZ3">
    <property type="expression patterns" value="baseline and differential"/>
</dbReference>
<dbReference type="GO" id="GO:0005739">
    <property type="term" value="C:mitochondrion"/>
    <property type="evidence" value="ECO:0007669"/>
    <property type="project" value="UniProtKB-SubCell"/>
</dbReference>
<dbReference type="GO" id="GO:0003723">
    <property type="term" value="F:RNA binding"/>
    <property type="evidence" value="ECO:0007669"/>
    <property type="project" value="InterPro"/>
</dbReference>
<dbReference type="GO" id="GO:0009451">
    <property type="term" value="P:RNA modification"/>
    <property type="evidence" value="ECO:0007669"/>
    <property type="project" value="InterPro"/>
</dbReference>
<dbReference type="FunFam" id="1.25.40.10:FF:001532">
    <property type="entry name" value="Pentatricopeptide repeat-containing protein mitochondrial"/>
    <property type="match status" value="1"/>
</dbReference>
<dbReference type="FunFam" id="1.25.40.10:FF:000462">
    <property type="entry name" value="Pentatricopeptide repeat-containing protein, chloroplastic"/>
    <property type="match status" value="1"/>
</dbReference>
<dbReference type="FunFam" id="1.25.40.10:FF:000576">
    <property type="entry name" value="Pentatricopeptide repeat-containing protein, chloroplastic"/>
    <property type="match status" value="1"/>
</dbReference>
<dbReference type="FunFam" id="1.25.40.10:FF:000277">
    <property type="entry name" value="Pentatricopeptide repeat-containing protein, mitochondrial"/>
    <property type="match status" value="1"/>
</dbReference>
<dbReference type="Gene3D" id="1.25.40.10">
    <property type="entry name" value="Tetratricopeptide repeat domain"/>
    <property type="match status" value="4"/>
</dbReference>
<dbReference type="InterPro" id="IPR046848">
    <property type="entry name" value="E_motif"/>
</dbReference>
<dbReference type="InterPro" id="IPR002885">
    <property type="entry name" value="Pentatricopeptide_rpt"/>
</dbReference>
<dbReference type="InterPro" id="IPR046960">
    <property type="entry name" value="PPR_At4g14850-like_plant"/>
</dbReference>
<dbReference type="InterPro" id="IPR011990">
    <property type="entry name" value="TPR-like_helical_dom_sf"/>
</dbReference>
<dbReference type="NCBIfam" id="TIGR00756">
    <property type="entry name" value="PPR"/>
    <property type="match status" value="6"/>
</dbReference>
<dbReference type="PANTHER" id="PTHR47926">
    <property type="entry name" value="PENTATRICOPEPTIDE REPEAT-CONTAINING PROTEIN"/>
    <property type="match status" value="1"/>
</dbReference>
<dbReference type="PANTHER" id="PTHR47926:SF436">
    <property type="entry name" value="PENTATRICOPEPTIDE REPEAT-CONTAINING PROTEIN ELI1, CHLOROPLASTIC-LIKE ISOFORM X2"/>
    <property type="match status" value="1"/>
</dbReference>
<dbReference type="Pfam" id="PF20431">
    <property type="entry name" value="E_motif"/>
    <property type="match status" value="1"/>
</dbReference>
<dbReference type="Pfam" id="PF01535">
    <property type="entry name" value="PPR"/>
    <property type="match status" value="3"/>
</dbReference>
<dbReference type="Pfam" id="PF12854">
    <property type="entry name" value="PPR_1"/>
    <property type="match status" value="1"/>
</dbReference>
<dbReference type="Pfam" id="PF13041">
    <property type="entry name" value="PPR_2"/>
    <property type="match status" value="4"/>
</dbReference>
<dbReference type="PROSITE" id="PS51375">
    <property type="entry name" value="PPR"/>
    <property type="match status" value="14"/>
</dbReference>